<dbReference type="EC" id="3.6.5.-" evidence="1"/>
<dbReference type="EMBL" id="CP000946">
    <property type="protein sequence ID" value="ACA76194.1"/>
    <property type="molecule type" value="Genomic_DNA"/>
</dbReference>
<dbReference type="SMR" id="B1IQU0"/>
<dbReference type="KEGG" id="ecl:EcolC_0517"/>
<dbReference type="HOGENOM" id="CLU_011747_2_0_6"/>
<dbReference type="GO" id="GO:0005737">
    <property type="term" value="C:cytoplasm"/>
    <property type="evidence" value="ECO:0007669"/>
    <property type="project" value="UniProtKB-SubCell"/>
</dbReference>
<dbReference type="GO" id="GO:0005525">
    <property type="term" value="F:GTP binding"/>
    <property type="evidence" value="ECO:0007669"/>
    <property type="project" value="UniProtKB-UniRule"/>
</dbReference>
<dbReference type="GO" id="GO:0003924">
    <property type="term" value="F:GTPase activity"/>
    <property type="evidence" value="ECO:0007669"/>
    <property type="project" value="UniProtKB-UniRule"/>
</dbReference>
<dbReference type="GO" id="GO:0000287">
    <property type="term" value="F:magnesium ion binding"/>
    <property type="evidence" value="ECO:0007669"/>
    <property type="project" value="InterPro"/>
</dbReference>
<dbReference type="GO" id="GO:0042254">
    <property type="term" value="P:ribosome biogenesis"/>
    <property type="evidence" value="ECO:0007669"/>
    <property type="project" value="UniProtKB-UniRule"/>
</dbReference>
<dbReference type="CDD" id="cd01898">
    <property type="entry name" value="Obg"/>
    <property type="match status" value="1"/>
</dbReference>
<dbReference type="FunFam" id="2.70.210.12:FF:000001">
    <property type="entry name" value="GTPase Obg"/>
    <property type="match status" value="1"/>
</dbReference>
<dbReference type="FunFam" id="3.40.50.300:FF:000185">
    <property type="entry name" value="GTPase Obg"/>
    <property type="match status" value="1"/>
</dbReference>
<dbReference type="Gene3D" id="2.70.210.12">
    <property type="entry name" value="GTP1/OBG domain"/>
    <property type="match status" value="1"/>
</dbReference>
<dbReference type="Gene3D" id="3.40.50.300">
    <property type="entry name" value="P-loop containing nucleotide triphosphate hydrolases"/>
    <property type="match status" value="1"/>
</dbReference>
<dbReference type="HAMAP" id="MF_01454">
    <property type="entry name" value="GTPase_Obg"/>
    <property type="match status" value="1"/>
</dbReference>
<dbReference type="InterPro" id="IPR031167">
    <property type="entry name" value="G_OBG"/>
</dbReference>
<dbReference type="InterPro" id="IPR006073">
    <property type="entry name" value="GTP-bd"/>
</dbReference>
<dbReference type="InterPro" id="IPR014100">
    <property type="entry name" value="GTP-bd_Obg/CgtA"/>
</dbReference>
<dbReference type="InterPro" id="IPR006074">
    <property type="entry name" value="GTP1-OBG_CS"/>
</dbReference>
<dbReference type="InterPro" id="IPR006169">
    <property type="entry name" value="GTP1_OBG_dom"/>
</dbReference>
<dbReference type="InterPro" id="IPR036726">
    <property type="entry name" value="GTP1_OBG_dom_sf"/>
</dbReference>
<dbReference type="InterPro" id="IPR045086">
    <property type="entry name" value="OBG_GTPase"/>
</dbReference>
<dbReference type="InterPro" id="IPR027417">
    <property type="entry name" value="P-loop_NTPase"/>
</dbReference>
<dbReference type="NCBIfam" id="TIGR02729">
    <property type="entry name" value="Obg_CgtA"/>
    <property type="match status" value="1"/>
</dbReference>
<dbReference type="NCBIfam" id="NF008955">
    <property type="entry name" value="PRK12297.1"/>
    <property type="match status" value="1"/>
</dbReference>
<dbReference type="NCBIfam" id="NF008956">
    <property type="entry name" value="PRK12299.1"/>
    <property type="match status" value="1"/>
</dbReference>
<dbReference type="PANTHER" id="PTHR11702">
    <property type="entry name" value="DEVELOPMENTALLY REGULATED GTP-BINDING PROTEIN-RELATED"/>
    <property type="match status" value="1"/>
</dbReference>
<dbReference type="PANTHER" id="PTHR11702:SF31">
    <property type="entry name" value="MITOCHONDRIAL RIBOSOME-ASSOCIATED GTPASE 2"/>
    <property type="match status" value="1"/>
</dbReference>
<dbReference type="Pfam" id="PF01018">
    <property type="entry name" value="GTP1_OBG"/>
    <property type="match status" value="1"/>
</dbReference>
<dbReference type="Pfam" id="PF01926">
    <property type="entry name" value="MMR_HSR1"/>
    <property type="match status" value="1"/>
</dbReference>
<dbReference type="PIRSF" id="PIRSF002401">
    <property type="entry name" value="GTP_bd_Obg/CgtA"/>
    <property type="match status" value="1"/>
</dbReference>
<dbReference type="PRINTS" id="PR00326">
    <property type="entry name" value="GTP1OBG"/>
</dbReference>
<dbReference type="SUPFAM" id="SSF82051">
    <property type="entry name" value="Obg GTP-binding protein N-terminal domain"/>
    <property type="match status" value="1"/>
</dbReference>
<dbReference type="SUPFAM" id="SSF52540">
    <property type="entry name" value="P-loop containing nucleoside triphosphate hydrolases"/>
    <property type="match status" value="1"/>
</dbReference>
<dbReference type="PROSITE" id="PS51710">
    <property type="entry name" value="G_OBG"/>
    <property type="match status" value="1"/>
</dbReference>
<dbReference type="PROSITE" id="PS00905">
    <property type="entry name" value="GTP1_OBG"/>
    <property type="match status" value="1"/>
</dbReference>
<dbReference type="PROSITE" id="PS51883">
    <property type="entry name" value="OBG"/>
    <property type="match status" value="1"/>
</dbReference>
<reference key="1">
    <citation type="submission" date="2008-02" db="EMBL/GenBank/DDBJ databases">
        <title>Complete sequence of Escherichia coli C str. ATCC 8739.</title>
        <authorList>
            <person name="Copeland A."/>
            <person name="Lucas S."/>
            <person name="Lapidus A."/>
            <person name="Glavina del Rio T."/>
            <person name="Dalin E."/>
            <person name="Tice H."/>
            <person name="Bruce D."/>
            <person name="Goodwin L."/>
            <person name="Pitluck S."/>
            <person name="Kiss H."/>
            <person name="Brettin T."/>
            <person name="Detter J.C."/>
            <person name="Han C."/>
            <person name="Kuske C.R."/>
            <person name="Schmutz J."/>
            <person name="Larimer F."/>
            <person name="Land M."/>
            <person name="Hauser L."/>
            <person name="Kyrpides N."/>
            <person name="Mikhailova N."/>
            <person name="Ingram L."/>
            <person name="Richardson P."/>
        </authorList>
    </citation>
    <scope>NUCLEOTIDE SEQUENCE [LARGE SCALE GENOMIC DNA]</scope>
    <source>
        <strain>ATCC 8739 / DSM 1576 / NBRC 3972 / NCIMB 8545 / WDCM 00012 / Crooks</strain>
    </source>
</reference>
<organism>
    <name type="scientific">Escherichia coli (strain ATCC 8739 / DSM 1576 / NBRC 3972 / NCIMB 8545 / WDCM 00012 / Crooks)</name>
    <dbReference type="NCBI Taxonomy" id="481805"/>
    <lineage>
        <taxon>Bacteria</taxon>
        <taxon>Pseudomonadati</taxon>
        <taxon>Pseudomonadota</taxon>
        <taxon>Gammaproteobacteria</taxon>
        <taxon>Enterobacterales</taxon>
        <taxon>Enterobacteriaceae</taxon>
        <taxon>Escherichia</taxon>
    </lineage>
</organism>
<feature type="chain" id="PRO_0000385911" description="GTPase Obg">
    <location>
        <begin position="1"/>
        <end position="390"/>
    </location>
</feature>
<feature type="domain" description="Obg" evidence="2">
    <location>
        <begin position="1"/>
        <end position="159"/>
    </location>
</feature>
<feature type="domain" description="OBG-type G" evidence="1">
    <location>
        <begin position="160"/>
        <end position="333"/>
    </location>
</feature>
<feature type="region of interest" description="Disordered" evidence="3">
    <location>
        <begin position="127"/>
        <end position="147"/>
    </location>
</feature>
<feature type="compositionally biased region" description="Polar residues" evidence="3">
    <location>
        <begin position="129"/>
        <end position="145"/>
    </location>
</feature>
<feature type="binding site" evidence="1">
    <location>
        <begin position="166"/>
        <end position="173"/>
    </location>
    <ligand>
        <name>GTP</name>
        <dbReference type="ChEBI" id="CHEBI:37565"/>
    </ligand>
</feature>
<feature type="binding site" evidence="1">
    <location>
        <position position="173"/>
    </location>
    <ligand>
        <name>Mg(2+)</name>
        <dbReference type="ChEBI" id="CHEBI:18420"/>
    </ligand>
</feature>
<feature type="binding site" evidence="1">
    <location>
        <begin position="191"/>
        <end position="195"/>
    </location>
    <ligand>
        <name>GTP</name>
        <dbReference type="ChEBI" id="CHEBI:37565"/>
    </ligand>
</feature>
<feature type="binding site" evidence="1">
    <location>
        <position position="193"/>
    </location>
    <ligand>
        <name>Mg(2+)</name>
        <dbReference type="ChEBI" id="CHEBI:18420"/>
    </ligand>
</feature>
<feature type="binding site" evidence="1">
    <location>
        <begin position="213"/>
        <end position="216"/>
    </location>
    <ligand>
        <name>GTP</name>
        <dbReference type="ChEBI" id="CHEBI:37565"/>
    </ligand>
</feature>
<feature type="binding site" evidence="1">
    <location>
        <begin position="283"/>
        <end position="286"/>
    </location>
    <ligand>
        <name>GTP</name>
        <dbReference type="ChEBI" id="CHEBI:37565"/>
    </ligand>
</feature>
<feature type="binding site" evidence="1">
    <location>
        <begin position="314"/>
        <end position="316"/>
    </location>
    <ligand>
        <name>GTP</name>
        <dbReference type="ChEBI" id="CHEBI:37565"/>
    </ligand>
</feature>
<protein>
    <recommendedName>
        <fullName evidence="1">GTPase Obg</fullName>
        <ecNumber evidence="1">3.6.5.-</ecNumber>
    </recommendedName>
    <alternativeName>
        <fullName evidence="1">GTP-binding protein Obg</fullName>
    </alternativeName>
</protein>
<accession>B1IQU0</accession>
<keyword id="KW-0963">Cytoplasm</keyword>
<keyword id="KW-0342">GTP-binding</keyword>
<keyword id="KW-0378">Hydrolase</keyword>
<keyword id="KW-0460">Magnesium</keyword>
<keyword id="KW-0479">Metal-binding</keyword>
<keyword id="KW-0547">Nucleotide-binding</keyword>
<sequence>MKFVDEASILVVAGDGGNGCVSFRREKYIPKGGPDGGDGGDGGDVWMEADENLNTLIDYRFEKSFRAERGQNGASRDCTGKRGKDVTIKVPVGTRVIDQGTGETMGDMTKHGQRLLVAKGGWHGLGNTRFKSSVNRTPRQKTNGTPGDKRELLLELMLLADVGMLGMPNAGKSTFIRAVSAAKPKVADYPFTTLVPSLGVVRMDNEKSFVVADIPGLIEGAAEGAGLGIRFLKHLERCRVLLHLIDIDPIDGTDPVENARIIISELEKYSQDLAAKPRWLVFNKIDLLDKAEAEEKAKAIAEALGWEDKYYLISAASGLGVKDLCWDVMTFIIENPVVQAEEAKQPEKVEFMWDDYHRQQLEEIAEEDDEDWDDDWDEDDEEGVEFIYKR</sequence>
<gene>
    <name evidence="1" type="primary">obg</name>
    <name type="ordered locus">EcolC_0517</name>
</gene>
<proteinExistence type="inferred from homology"/>
<evidence type="ECO:0000255" key="1">
    <source>
        <dbReference type="HAMAP-Rule" id="MF_01454"/>
    </source>
</evidence>
<evidence type="ECO:0000255" key="2">
    <source>
        <dbReference type="PROSITE-ProRule" id="PRU01231"/>
    </source>
</evidence>
<evidence type="ECO:0000256" key="3">
    <source>
        <dbReference type="SAM" id="MobiDB-lite"/>
    </source>
</evidence>
<name>OBG_ECOLC</name>
<comment type="function">
    <text evidence="1">An essential GTPase which binds GTP, GDP and possibly (p)ppGpp with moderate affinity, with high nucleotide exchange rates and a fairly low GTP hydrolysis rate. Plays a role in control of the cell cycle, stress response, ribosome biogenesis and in those bacteria that undergo differentiation, in morphogenesis control.</text>
</comment>
<comment type="cofactor">
    <cofactor evidence="1">
        <name>Mg(2+)</name>
        <dbReference type="ChEBI" id="CHEBI:18420"/>
    </cofactor>
</comment>
<comment type="subunit">
    <text evidence="1">Monomer.</text>
</comment>
<comment type="subcellular location">
    <subcellularLocation>
        <location evidence="1">Cytoplasm</location>
    </subcellularLocation>
</comment>
<comment type="similarity">
    <text evidence="1">Belongs to the TRAFAC class OBG-HflX-like GTPase superfamily. OBG GTPase family.</text>
</comment>